<dbReference type="GO" id="GO:0005576">
    <property type="term" value="C:extracellular region"/>
    <property type="evidence" value="ECO:0007669"/>
    <property type="project" value="UniProtKB-SubCell"/>
</dbReference>
<dbReference type="GO" id="GO:0005179">
    <property type="term" value="F:hormone activity"/>
    <property type="evidence" value="ECO:0007669"/>
    <property type="project" value="UniProtKB-KW"/>
</dbReference>
<dbReference type="GO" id="GO:0007629">
    <property type="term" value="P:flight behavior"/>
    <property type="evidence" value="ECO:0007669"/>
    <property type="project" value="UniProtKB-KW"/>
</dbReference>
<dbReference type="GO" id="GO:0007218">
    <property type="term" value="P:neuropeptide signaling pathway"/>
    <property type="evidence" value="ECO:0007669"/>
    <property type="project" value="UniProtKB-KW"/>
</dbReference>
<dbReference type="InterPro" id="IPR002047">
    <property type="entry name" value="Adipokinetic_hormone_CS"/>
</dbReference>
<dbReference type="PROSITE" id="PS00256">
    <property type="entry name" value="AKH"/>
    <property type="match status" value="1"/>
</dbReference>
<protein>
    <recommendedName>
        <fullName evidence="4">Adipokinetic hormone</fullName>
        <shortName evidence="4">AKH</shortName>
    </recommendedName>
</protein>
<sequence>QVNFTPSW</sequence>
<organism>
    <name type="scientific">Striatophasma naukluftense</name>
    <name type="common">Gladiator</name>
    <name type="synonym">Heel-walker</name>
    <dbReference type="NCBI Taxonomy" id="1041429"/>
    <lineage>
        <taxon>Eukaryota</taxon>
        <taxon>Metazoa</taxon>
        <taxon>Ecdysozoa</taxon>
        <taxon>Arthropoda</taxon>
        <taxon>Hexapoda</taxon>
        <taxon>Insecta</taxon>
        <taxon>Pterygota</taxon>
        <taxon>Neoptera</taxon>
        <taxon>Polyneoptera</taxon>
        <taxon>Mantophasmatodea</taxon>
        <taxon>Austrophasmatidae</taxon>
        <taxon>Striatophasma</taxon>
    </lineage>
</organism>
<evidence type="ECO:0000250" key="1"/>
<evidence type="ECO:0000255" key="2"/>
<evidence type="ECO:0000269" key="3">
    <source>
    </source>
</evidence>
<evidence type="ECO:0000303" key="4">
    <source>
    </source>
</evidence>
<evidence type="ECO:0000305" key="5"/>
<evidence type="ECO:0000305" key="6">
    <source>
    </source>
</evidence>
<keyword id="KW-0027">Amidation</keyword>
<keyword id="KW-0903">Direct protein sequencing</keyword>
<keyword id="KW-0286">Flight</keyword>
<keyword id="KW-0372">Hormone</keyword>
<keyword id="KW-0527">Neuropeptide</keyword>
<keyword id="KW-0873">Pyrrolidone carboxylic acid</keyword>
<keyword id="KW-0964">Secreted</keyword>
<proteinExistence type="evidence at protein level"/>
<accession>B0M3C0</accession>
<reference evidence="5" key="1">
    <citation type="journal article" date="2012" name="Syst. Biol.">
        <title>Peptidomics-based phylogeny and biogeography of Mantophasmatodea (Hexapoda).</title>
        <authorList>
            <person name="Predel R."/>
            <person name="Neupert S."/>
            <person name="Huetteroth W."/>
            <person name="Kahnt J."/>
            <person name="Waidelich D."/>
            <person name="Roth S."/>
        </authorList>
    </citation>
    <scope>PROTEIN SEQUENCE</scope>
    <scope>PYROGLUTAMATE FORMATION AT GLN-1</scope>
    <scope>AMIDATION AT TRP-8</scope>
    <source>
        <tissue evidence="3">Corpora cardiaca</tissue>
    </source>
</reference>
<comment type="function">
    <text evidence="1">This hormone, released from cells in the corpora cardiaca, causes release of diglycerides from the fat body and stimulation of muscles to use these diglycerides as an energy source during energy-demanding processes.</text>
</comment>
<comment type="subcellular location">
    <subcellularLocation>
        <location evidence="6">Secreted</location>
    </subcellularLocation>
</comment>
<comment type="similarity">
    <text evidence="2">Belongs to the AKH/HRTH/RPCH family.</text>
</comment>
<name>AKH_STRNA</name>
<feature type="peptide" id="PRO_0000420736" description="Adipokinetic hormone" evidence="3">
    <location>
        <begin position="1"/>
        <end position="8"/>
    </location>
</feature>
<feature type="modified residue" description="Pyrrolidone carboxylic acid" evidence="3">
    <location>
        <position position="1"/>
    </location>
</feature>
<feature type="modified residue" description="Tryptophan amide" evidence="3">
    <location>
        <position position="8"/>
    </location>
</feature>